<comment type="catalytic activity">
    <reaction evidence="1">
        <text>1-(2-carboxyphenylamino)-1-deoxy-D-ribulose 5-phosphate + H(+) = (1S,2R)-1-C-(indol-3-yl)glycerol 3-phosphate + CO2 + H2O</text>
        <dbReference type="Rhea" id="RHEA:23476"/>
        <dbReference type="ChEBI" id="CHEBI:15377"/>
        <dbReference type="ChEBI" id="CHEBI:15378"/>
        <dbReference type="ChEBI" id="CHEBI:16526"/>
        <dbReference type="ChEBI" id="CHEBI:58613"/>
        <dbReference type="ChEBI" id="CHEBI:58866"/>
        <dbReference type="EC" id="4.1.1.48"/>
    </reaction>
</comment>
<comment type="pathway">
    <text evidence="1">Amino-acid biosynthesis; L-tryptophan biosynthesis; L-tryptophan from chorismate: step 4/5.</text>
</comment>
<comment type="similarity">
    <text evidence="1">Belongs to the TrpC family.</text>
</comment>
<proteinExistence type="inferred from homology"/>
<feature type="chain" id="PRO_1000071435" description="Indole-3-glycerol phosphate synthase">
    <location>
        <begin position="1"/>
        <end position="250"/>
    </location>
</feature>
<gene>
    <name evidence="1" type="primary">trpC</name>
    <name type="ordered locus">Msed_1685</name>
</gene>
<sequence length="250" mass="27997">MPRYLEGWIKDVVENAKRRPYVSRSREKPVLQIIPRIRAVKGAGLNPVIAEYKRKSPSGFSEDRDPISYAKSMEQGGAVAISVITENTVFGGSYEYLERIARNVKIPLLMKDFVVSENQVDTAYDLGADFVLLIVRILTERELSGLLEYVRSYGMEALVEVHDREDLDIALRSGASLIGVNSRDLFSLTIQKEMAMKLLEQIPSTVTKVAESGIESAEEIRLLREKGADAFLIGSSLMRNPDKIKEFVQG</sequence>
<reference key="1">
    <citation type="journal article" date="2008" name="Appl. Environ. Microbiol.">
        <title>The genome sequence of the metal-mobilizing, extremely thermoacidophilic archaeon Metallosphaera sedula provides insights into bioleaching-associated metabolism.</title>
        <authorList>
            <person name="Auernik K.S."/>
            <person name="Maezato Y."/>
            <person name="Blum P.H."/>
            <person name="Kelly R.M."/>
        </authorList>
    </citation>
    <scope>NUCLEOTIDE SEQUENCE [LARGE SCALE GENOMIC DNA]</scope>
    <source>
        <strain>ATCC 51363 / DSM 5348 / JCM 9185 / NBRC 15509 / TH2</strain>
    </source>
</reference>
<name>TRPC_METS5</name>
<accession>A4YHD8</accession>
<organism>
    <name type="scientific">Metallosphaera sedula (strain ATCC 51363 / DSM 5348 / JCM 9185 / NBRC 15509 / TH2)</name>
    <dbReference type="NCBI Taxonomy" id="399549"/>
    <lineage>
        <taxon>Archaea</taxon>
        <taxon>Thermoproteota</taxon>
        <taxon>Thermoprotei</taxon>
        <taxon>Sulfolobales</taxon>
        <taxon>Sulfolobaceae</taxon>
        <taxon>Metallosphaera</taxon>
    </lineage>
</organism>
<dbReference type="EC" id="4.1.1.48" evidence="1"/>
<dbReference type="EMBL" id="CP000682">
    <property type="protein sequence ID" value="ABP95840.1"/>
    <property type="molecule type" value="Genomic_DNA"/>
</dbReference>
<dbReference type="RefSeq" id="WP_012021627.1">
    <property type="nucleotide sequence ID" value="NZ_CP139956.1"/>
</dbReference>
<dbReference type="SMR" id="A4YHD8"/>
<dbReference type="STRING" id="399549.Msed_1685"/>
<dbReference type="GeneID" id="97613205"/>
<dbReference type="KEGG" id="mse:Msed_1685"/>
<dbReference type="eggNOG" id="arCOG01088">
    <property type="taxonomic scope" value="Archaea"/>
</dbReference>
<dbReference type="HOGENOM" id="CLU_034247_0_1_2"/>
<dbReference type="UniPathway" id="UPA00035">
    <property type="reaction ID" value="UER00043"/>
</dbReference>
<dbReference type="Proteomes" id="UP000000242">
    <property type="component" value="Chromosome"/>
</dbReference>
<dbReference type="GO" id="GO:0004425">
    <property type="term" value="F:indole-3-glycerol-phosphate synthase activity"/>
    <property type="evidence" value="ECO:0007669"/>
    <property type="project" value="UniProtKB-UniRule"/>
</dbReference>
<dbReference type="GO" id="GO:0004640">
    <property type="term" value="F:phosphoribosylanthranilate isomerase activity"/>
    <property type="evidence" value="ECO:0007669"/>
    <property type="project" value="TreeGrafter"/>
</dbReference>
<dbReference type="GO" id="GO:0000162">
    <property type="term" value="P:L-tryptophan biosynthetic process"/>
    <property type="evidence" value="ECO:0007669"/>
    <property type="project" value="UniProtKB-UniRule"/>
</dbReference>
<dbReference type="CDD" id="cd00331">
    <property type="entry name" value="IGPS"/>
    <property type="match status" value="1"/>
</dbReference>
<dbReference type="Gene3D" id="3.20.20.70">
    <property type="entry name" value="Aldolase class I"/>
    <property type="match status" value="1"/>
</dbReference>
<dbReference type="HAMAP" id="MF_00134_A">
    <property type="entry name" value="IGPS_A"/>
    <property type="match status" value="1"/>
</dbReference>
<dbReference type="InterPro" id="IPR013785">
    <property type="entry name" value="Aldolase_TIM"/>
</dbReference>
<dbReference type="InterPro" id="IPR045186">
    <property type="entry name" value="Indole-3-glycerol_P_synth"/>
</dbReference>
<dbReference type="InterPro" id="IPR013798">
    <property type="entry name" value="Indole-3-glycerol_P_synth_dom"/>
</dbReference>
<dbReference type="InterPro" id="IPR011060">
    <property type="entry name" value="RibuloseP-bd_barrel"/>
</dbReference>
<dbReference type="NCBIfam" id="NF001374">
    <property type="entry name" value="PRK00278.2-1"/>
    <property type="match status" value="1"/>
</dbReference>
<dbReference type="PANTHER" id="PTHR22854:SF2">
    <property type="entry name" value="INDOLE-3-GLYCEROL-PHOSPHATE SYNTHASE"/>
    <property type="match status" value="1"/>
</dbReference>
<dbReference type="PANTHER" id="PTHR22854">
    <property type="entry name" value="TRYPTOPHAN BIOSYNTHESIS PROTEIN"/>
    <property type="match status" value="1"/>
</dbReference>
<dbReference type="Pfam" id="PF00218">
    <property type="entry name" value="IGPS"/>
    <property type="match status" value="1"/>
</dbReference>
<dbReference type="SUPFAM" id="SSF51366">
    <property type="entry name" value="Ribulose-phoshate binding barrel"/>
    <property type="match status" value="1"/>
</dbReference>
<protein>
    <recommendedName>
        <fullName evidence="1">Indole-3-glycerol phosphate synthase</fullName>
        <shortName evidence="1">IGPS</shortName>
        <ecNumber evidence="1">4.1.1.48</ecNumber>
    </recommendedName>
</protein>
<evidence type="ECO:0000255" key="1">
    <source>
        <dbReference type="HAMAP-Rule" id="MF_00134"/>
    </source>
</evidence>
<keyword id="KW-0028">Amino-acid biosynthesis</keyword>
<keyword id="KW-0057">Aromatic amino acid biosynthesis</keyword>
<keyword id="KW-0210">Decarboxylase</keyword>
<keyword id="KW-0456">Lyase</keyword>
<keyword id="KW-1185">Reference proteome</keyword>
<keyword id="KW-0822">Tryptophan biosynthesis</keyword>